<gene>
    <name evidence="1" type="primary">rsbW</name>
    <name type="ordered locus">BH0528</name>
</gene>
<reference key="1">
    <citation type="journal article" date="2000" name="Nucleic Acids Res.">
        <title>Complete genome sequence of the alkaliphilic bacterium Bacillus halodurans and genomic sequence comparison with Bacillus subtilis.</title>
        <authorList>
            <person name="Takami H."/>
            <person name="Nakasone K."/>
            <person name="Takaki Y."/>
            <person name="Maeno G."/>
            <person name="Sasaki R."/>
            <person name="Masui N."/>
            <person name="Fuji F."/>
            <person name="Hirama C."/>
            <person name="Nakamura Y."/>
            <person name="Ogasawara N."/>
            <person name="Kuhara S."/>
            <person name="Horikoshi K."/>
        </authorList>
    </citation>
    <scope>NUCLEOTIDE SEQUENCE [LARGE SCALE GENOMIC DNA]</scope>
    <source>
        <strain>ATCC BAA-125 / DSM 18197 / FERM 7344 / JCM 9153 / C-125</strain>
    </source>
</reference>
<evidence type="ECO:0000255" key="1">
    <source>
        <dbReference type="HAMAP-Rule" id="MF_00638"/>
    </source>
</evidence>
<organism>
    <name type="scientific">Halalkalibacterium halodurans (strain ATCC BAA-125 / DSM 18197 / FERM 7344 / JCM 9153 / C-125)</name>
    <name type="common">Bacillus halodurans</name>
    <dbReference type="NCBI Taxonomy" id="272558"/>
    <lineage>
        <taxon>Bacteria</taxon>
        <taxon>Bacillati</taxon>
        <taxon>Bacillota</taxon>
        <taxon>Bacilli</taxon>
        <taxon>Bacillales</taxon>
        <taxon>Bacillaceae</taxon>
        <taxon>Halalkalibacterium (ex Joshi et al. 2022)</taxon>
    </lineage>
</organism>
<protein>
    <recommendedName>
        <fullName evidence="1">Serine-protein kinase RsbW</fullName>
        <ecNumber evidence="1">2.7.11.1</ecNumber>
    </recommendedName>
    <alternativeName>
        <fullName evidence="1">Anti-sigma-B factor</fullName>
    </alternativeName>
    <alternativeName>
        <fullName evidence="1">Sigma-B negative effector RsbW</fullName>
    </alternativeName>
</protein>
<sequence length="162" mass="17992">MRVHQPETIEMTVPAKSEFVGVVRLTVSGIANRLGYTYDDIEDIKIAVAEACTNVVDHAYDEGGTMGLSFHLYEDRMEIIVTDQGQSFDMDAFRESLGPIDGSKPIQDLKEGGLGLFLINTLMDKVEMKEDSGVVLAMTKFLQRDEVDNRVDGISATQTEQR</sequence>
<name>RSBW_HALH5</name>
<feature type="chain" id="PRO_0000203529" description="Serine-protein kinase RsbW">
    <location>
        <begin position="1"/>
        <end position="162"/>
    </location>
</feature>
<proteinExistence type="inferred from homology"/>
<keyword id="KW-0067">ATP-binding</keyword>
<keyword id="KW-0418">Kinase</keyword>
<keyword id="KW-0547">Nucleotide-binding</keyword>
<keyword id="KW-1185">Reference proteome</keyword>
<keyword id="KW-0723">Serine/threonine-protein kinase</keyword>
<keyword id="KW-0808">Transferase</keyword>
<accession>Q9KFF1</accession>
<comment type="function">
    <text evidence="1">Negative regulator of sigma-B activity. Phosphorylates and inactivates its specific antagonist protein, RsbV. Upon phosphorylation of RsbV, RsbW is released and binds to sigma-B, thereby blocking its ability to form an RNA polymerase holoenzyme (E-sigma-B).</text>
</comment>
<comment type="catalytic activity">
    <reaction evidence="1">
        <text>L-seryl-[protein] + ATP = O-phospho-L-seryl-[protein] + ADP + H(+)</text>
        <dbReference type="Rhea" id="RHEA:17989"/>
        <dbReference type="Rhea" id="RHEA-COMP:9863"/>
        <dbReference type="Rhea" id="RHEA-COMP:11604"/>
        <dbReference type="ChEBI" id="CHEBI:15378"/>
        <dbReference type="ChEBI" id="CHEBI:29999"/>
        <dbReference type="ChEBI" id="CHEBI:30616"/>
        <dbReference type="ChEBI" id="CHEBI:83421"/>
        <dbReference type="ChEBI" id="CHEBI:456216"/>
        <dbReference type="EC" id="2.7.11.1"/>
    </reaction>
</comment>
<comment type="catalytic activity">
    <reaction evidence="1">
        <text>L-threonyl-[protein] + ATP = O-phospho-L-threonyl-[protein] + ADP + H(+)</text>
        <dbReference type="Rhea" id="RHEA:46608"/>
        <dbReference type="Rhea" id="RHEA-COMP:11060"/>
        <dbReference type="Rhea" id="RHEA-COMP:11605"/>
        <dbReference type="ChEBI" id="CHEBI:15378"/>
        <dbReference type="ChEBI" id="CHEBI:30013"/>
        <dbReference type="ChEBI" id="CHEBI:30616"/>
        <dbReference type="ChEBI" id="CHEBI:61977"/>
        <dbReference type="ChEBI" id="CHEBI:456216"/>
        <dbReference type="EC" id="2.7.11.1"/>
    </reaction>
</comment>
<comment type="similarity">
    <text evidence="1">Belongs to the anti-sigma-factor family.</text>
</comment>
<dbReference type="EC" id="2.7.11.1" evidence="1"/>
<dbReference type="EMBL" id="BA000004">
    <property type="protein sequence ID" value="BAB04247.1"/>
    <property type="molecule type" value="Genomic_DNA"/>
</dbReference>
<dbReference type="PIR" id="H83715">
    <property type="entry name" value="H83715"/>
</dbReference>
<dbReference type="RefSeq" id="WP_010896706.1">
    <property type="nucleotide sequence ID" value="NC_002570.2"/>
</dbReference>
<dbReference type="SMR" id="Q9KFF1"/>
<dbReference type="STRING" id="272558.gene:10726381"/>
<dbReference type="KEGG" id="bha:BH0528"/>
<dbReference type="eggNOG" id="COG2172">
    <property type="taxonomic scope" value="Bacteria"/>
</dbReference>
<dbReference type="HOGENOM" id="CLU_090336_11_1_9"/>
<dbReference type="OrthoDB" id="9798941at2"/>
<dbReference type="Proteomes" id="UP000001258">
    <property type="component" value="Chromosome"/>
</dbReference>
<dbReference type="GO" id="GO:0005524">
    <property type="term" value="F:ATP binding"/>
    <property type="evidence" value="ECO:0007669"/>
    <property type="project" value="UniProtKB-KW"/>
</dbReference>
<dbReference type="GO" id="GO:0106310">
    <property type="term" value="F:protein serine kinase activity"/>
    <property type="evidence" value="ECO:0007669"/>
    <property type="project" value="RHEA"/>
</dbReference>
<dbReference type="GO" id="GO:0004674">
    <property type="term" value="F:protein serine/threonine kinase activity"/>
    <property type="evidence" value="ECO:0007669"/>
    <property type="project" value="UniProtKB-KW"/>
</dbReference>
<dbReference type="GO" id="GO:0016989">
    <property type="term" value="F:sigma factor antagonist activity"/>
    <property type="evidence" value="ECO:0007669"/>
    <property type="project" value="InterPro"/>
</dbReference>
<dbReference type="CDD" id="cd16936">
    <property type="entry name" value="HATPase_RsbW-like"/>
    <property type="match status" value="1"/>
</dbReference>
<dbReference type="Gene3D" id="3.30.565.10">
    <property type="entry name" value="Histidine kinase-like ATPase, C-terminal domain"/>
    <property type="match status" value="1"/>
</dbReference>
<dbReference type="HAMAP" id="MF_00638">
    <property type="entry name" value="Anti_sigma_B"/>
    <property type="match status" value="1"/>
</dbReference>
<dbReference type="InterPro" id="IPR050267">
    <property type="entry name" value="Anti-sigma-factor_SerPK"/>
</dbReference>
<dbReference type="InterPro" id="IPR036890">
    <property type="entry name" value="HATPase_C_sf"/>
</dbReference>
<dbReference type="InterPro" id="IPR010193">
    <property type="entry name" value="RsbW"/>
</dbReference>
<dbReference type="NCBIfam" id="NF003144">
    <property type="entry name" value="PRK04069.1"/>
    <property type="match status" value="1"/>
</dbReference>
<dbReference type="NCBIfam" id="TIGR01924">
    <property type="entry name" value="rsbW_low_gc"/>
    <property type="match status" value="1"/>
</dbReference>
<dbReference type="PANTHER" id="PTHR35526">
    <property type="entry name" value="ANTI-SIGMA-F FACTOR RSBW-RELATED"/>
    <property type="match status" value="1"/>
</dbReference>
<dbReference type="PANTHER" id="PTHR35526:SF9">
    <property type="entry name" value="SERINE-PROTEIN KINASE RSBW"/>
    <property type="match status" value="1"/>
</dbReference>
<dbReference type="Pfam" id="PF13581">
    <property type="entry name" value="HATPase_c_2"/>
    <property type="match status" value="1"/>
</dbReference>
<dbReference type="SUPFAM" id="SSF55874">
    <property type="entry name" value="ATPase domain of HSP90 chaperone/DNA topoisomerase II/histidine kinase"/>
    <property type="match status" value="1"/>
</dbReference>